<dbReference type="EC" id="4.1.1.65" evidence="1"/>
<dbReference type="EMBL" id="CP000394">
    <property type="protein sequence ID" value="ABI61239.1"/>
    <property type="molecule type" value="Genomic_DNA"/>
</dbReference>
<dbReference type="SMR" id="Q0BVB3"/>
<dbReference type="STRING" id="391165.GbCGDNIH1_0341"/>
<dbReference type="KEGG" id="gbe:GbCGDNIH1_0341"/>
<dbReference type="eggNOG" id="COG0688">
    <property type="taxonomic scope" value="Bacteria"/>
</dbReference>
<dbReference type="HOGENOM" id="CLU_072492_0_0_5"/>
<dbReference type="OrthoDB" id="9790893at2"/>
<dbReference type="UniPathway" id="UPA00558">
    <property type="reaction ID" value="UER00616"/>
</dbReference>
<dbReference type="Proteomes" id="UP000001963">
    <property type="component" value="Chromosome"/>
</dbReference>
<dbReference type="GO" id="GO:0005886">
    <property type="term" value="C:plasma membrane"/>
    <property type="evidence" value="ECO:0007669"/>
    <property type="project" value="UniProtKB-SubCell"/>
</dbReference>
<dbReference type="GO" id="GO:0004609">
    <property type="term" value="F:phosphatidylserine decarboxylase activity"/>
    <property type="evidence" value="ECO:0007669"/>
    <property type="project" value="UniProtKB-UniRule"/>
</dbReference>
<dbReference type="GO" id="GO:0006646">
    <property type="term" value="P:phosphatidylethanolamine biosynthetic process"/>
    <property type="evidence" value="ECO:0007669"/>
    <property type="project" value="UniProtKB-UniRule"/>
</dbReference>
<dbReference type="HAMAP" id="MF_00664">
    <property type="entry name" value="PS_decarb_PSD_A"/>
    <property type="match status" value="1"/>
</dbReference>
<dbReference type="InterPro" id="IPR003817">
    <property type="entry name" value="PS_Dcarbxylase"/>
</dbReference>
<dbReference type="InterPro" id="IPR033175">
    <property type="entry name" value="PSD-A"/>
</dbReference>
<dbReference type="NCBIfam" id="NF003678">
    <property type="entry name" value="PRK05305.1-2"/>
    <property type="match status" value="1"/>
</dbReference>
<dbReference type="NCBIfam" id="NF003679">
    <property type="entry name" value="PRK05305.1-3"/>
    <property type="match status" value="1"/>
</dbReference>
<dbReference type="PANTHER" id="PTHR35809">
    <property type="entry name" value="ARCHAETIDYLSERINE DECARBOXYLASE PROENZYME-RELATED"/>
    <property type="match status" value="1"/>
</dbReference>
<dbReference type="PANTHER" id="PTHR35809:SF1">
    <property type="entry name" value="ARCHAETIDYLSERINE DECARBOXYLASE PROENZYME-RELATED"/>
    <property type="match status" value="1"/>
</dbReference>
<dbReference type="Pfam" id="PF02666">
    <property type="entry name" value="PS_Dcarbxylase"/>
    <property type="match status" value="1"/>
</dbReference>
<organism>
    <name type="scientific">Granulibacter bethesdensis (strain ATCC BAA-1260 / CGDNIH1)</name>
    <dbReference type="NCBI Taxonomy" id="391165"/>
    <lineage>
        <taxon>Bacteria</taxon>
        <taxon>Pseudomonadati</taxon>
        <taxon>Pseudomonadota</taxon>
        <taxon>Alphaproteobacteria</taxon>
        <taxon>Acetobacterales</taxon>
        <taxon>Acetobacteraceae</taxon>
        <taxon>Granulibacter</taxon>
    </lineage>
</organism>
<gene>
    <name evidence="1" type="primary">psd</name>
    <name type="ordered locus">GbCGDNIH1_0341</name>
</gene>
<sequence>MPLYSEGFITVRSIPKGKSAQMSMVQSVKMVLAPPHPAARPFLIGGVAVALVGLFLSHWIVWLGVAFTLFCLFFFRDPERVPPGRTGLALAPADGHVVSVAPAVPPPELGLGDTPRWRVATFLSVLDVHVNRMPVDGTVTKIAYRPGKFVNASLDKASEDNERNALAIRMPDGRTVAVVQIAGLIARRILCDAREGDVVNAGARFGIIRFGSRTDMYLPEGVVPLVTEGQTMIGGETVIADLTP</sequence>
<keyword id="KW-1003">Cell membrane</keyword>
<keyword id="KW-0210">Decarboxylase</keyword>
<keyword id="KW-0444">Lipid biosynthesis</keyword>
<keyword id="KW-0443">Lipid metabolism</keyword>
<keyword id="KW-0456">Lyase</keyword>
<keyword id="KW-0472">Membrane</keyword>
<keyword id="KW-0594">Phospholipid biosynthesis</keyword>
<keyword id="KW-1208">Phospholipid metabolism</keyword>
<keyword id="KW-0670">Pyruvate</keyword>
<keyword id="KW-1185">Reference proteome</keyword>
<keyword id="KW-0865">Zymogen</keyword>
<proteinExistence type="inferred from homology"/>
<feature type="chain" id="PRO_0000262221" description="Phosphatidylserine decarboxylase beta chain" evidence="1">
    <location>
        <begin position="1"/>
        <end position="211"/>
    </location>
</feature>
<feature type="chain" id="PRO_0000262222" description="Phosphatidylserine decarboxylase alpha chain" evidence="1">
    <location>
        <begin position="212"/>
        <end position="244"/>
    </location>
</feature>
<feature type="active site" description="Schiff-base intermediate with substrate; via pyruvic acid" evidence="1">
    <location>
        <position position="212"/>
    </location>
</feature>
<feature type="site" description="Cleavage (non-hydrolytic); by autocatalysis" evidence="1">
    <location>
        <begin position="211"/>
        <end position="212"/>
    </location>
</feature>
<feature type="modified residue" description="Pyruvic acid (Ser); by autocatalysis" evidence="1">
    <location>
        <position position="212"/>
    </location>
</feature>
<comment type="function">
    <text evidence="1">Catalyzes the formation of phosphatidylethanolamine (PtdEtn) from phosphatidylserine (PtdSer).</text>
</comment>
<comment type="catalytic activity">
    <reaction evidence="1">
        <text>a 1,2-diacyl-sn-glycero-3-phospho-L-serine + H(+) = a 1,2-diacyl-sn-glycero-3-phosphoethanolamine + CO2</text>
        <dbReference type="Rhea" id="RHEA:20828"/>
        <dbReference type="ChEBI" id="CHEBI:15378"/>
        <dbReference type="ChEBI" id="CHEBI:16526"/>
        <dbReference type="ChEBI" id="CHEBI:57262"/>
        <dbReference type="ChEBI" id="CHEBI:64612"/>
        <dbReference type="EC" id="4.1.1.65"/>
    </reaction>
</comment>
<comment type="cofactor">
    <cofactor evidence="1">
        <name>pyruvate</name>
        <dbReference type="ChEBI" id="CHEBI:15361"/>
    </cofactor>
    <text evidence="1">Binds 1 pyruvoyl group covalently per subunit.</text>
</comment>
<comment type="pathway">
    <text evidence="1">Phospholipid metabolism; phosphatidylethanolamine biosynthesis; phosphatidylethanolamine from CDP-diacylglycerol: step 2/2.</text>
</comment>
<comment type="subunit">
    <text evidence="1">Heterodimer of a large membrane-associated beta subunit and a small pyruvoyl-containing alpha subunit.</text>
</comment>
<comment type="subcellular location">
    <subcellularLocation>
        <location evidence="1">Cell membrane</location>
        <topology evidence="1">Peripheral membrane protein</topology>
    </subcellularLocation>
</comment>
<comment type="PTM">
    <text evidence="1">Is synthesized initially as an inactive proenzyme. Formation of the active enzyme involves a self-maturation process in which the active site pyruvoyl group is generated from an internal serine residue via an autocatalytic post-translational modification. Two non-identical subunits are generated from the proenzyme in this reaction, and the pyruvate is formed at the N-terminus of the alpha chain, which is derived from the carboxyl end of the proenzyme. The post-translation cleavage follows an unusual pathway, termed non-hydrolytic serinolysis, in which the side chain hydroxyl group of the serine supplies its oxygen atom to form the C-terminus of the beta chain, while the remainder of the serine residue undergoes an oxidative deamination to produce ammonia and the pyruvoyl prosthetic group on the alpha chain.</text>
</comment>
<comment type="similarity">
    <text evidence="1">Belongs to the phosphatidylserine decarboxylase family. PSD-A subfamily.</text>
</comment>
<protein>
    <recommendedName>
        <fullName evidence="1">Phosphatidylserine decarboxylase proenzyme</fullName>
        <ecNumber evidence="1">4.1.1.65</ecNumber>
    </recommendedName>
    <component>
        <recommendedName>
            <fullName evidence="1">Phosphatidylserine decarboxylase alpha chain</fullName>
        </recommendedName>
    </component>
    <component>
        <recommendedName>
            <fullName evidence="1">Phosphatidylserine decarboxylase beta chain</fullName>
        </recommendedName>
    </component>
</protein>
<name>PSD_GRABC</name>
<evidence type="ECO:0000255" key="1">
    <source>
        <dbReference type="HAMAP-Rule" id="MF_00664"/>
    </source>
</evidence>
<reference key="1">
    <citation type="journal article" date="2007" name="J. Bacteriol.">
        <title>Genome sequence analysis of the emerging human pathogenic acetic acid bacterium Granulibacter bethesdensis.</title>
        <authorList>
            <person name="Greenberg D.E."/>
            <person name="Porcella S.F."/>
            <person name="Zelazny A.M."/>
            <person name="Virtaneva K."/>
            <person name="Sturdevant D.E."/>
            <person name="Kupko J.J. III"/>
            <person name="Barbian K.D."/>
            <person name="Babar A."/>
            <person name="Dorward D.W."/>
            <person name="Holland S.M."/>
        </authorList>
    </citation>
    <scope>NUCLEOTIDE SEQUENCE [LARGE SCALE GENOMIC DNA]</scope>
    <source>
        <strain>ATCC BAA-1260 / CGDNIH1</strain>
    </source>
</reference>
<accession>Q0BVB3</accession>